<dbReference type="EMBL" id="BX571659">
    <property type="protein sequence ID" value="CAE09912.1"/>
    <property type="molecule type" value="Genomic_DNA"/>
</dbReference>
<dbReference type="RefSeq" id="WP_011138709.1">
    <property type="nucleotide sequence ID" value="NC_005090.1"/>
</dbReference>
<dbReference type="SMR" id="Q7M9N2"/>
<dbReference type="STRING" id="273121.WS0799"/>
<dbReference type="KEGG" id="wsu:WS0799"/>
<dbReference type="eggNOG" id="COG0782">
    <property type="taxonomic scope" value="Bacteria"/>
</dbReference>
<dbReference type="HOGENOM" id="CLU_101379_2_0_7"/>
<dbReference type="Proteomes" id="UP000000422">
    <property type="component" value="Chromosome"/>
</dbReference>
<dbReference type="GO" id="GO:0003677">
    <property type="term" value="F:DNA binding"/>
    <property type="evidence" value="ECO:0007669"/>
    <property type="project" value="UniProtKB-UniRule"/>
</dbReference>
<dbReference type="GO" id="GO:0070063">
    <property type="term" value="F:RNA polymerase binding"/>
    <property type="evidence" value="ECO:0007669"/>
    <property type="project" value="InterPro"/>
</dbReference>
<dbReference type="GO" id="GO:0006354">
    <property type="term" value="P:DNA-templated transcription elongation"/>
    <property type="evidence" value="ECO:0007669"/>
    <property type="project" value="TreeGrafter"/>
</dbReference>
<dbReference type="GO" id="GO:0032784">
    <property type="term" value="P:regulation of DNA-templated transcription elongation"/>
    <property type="evidence" value="ECO:0007669"/>
    <property type="project" value="UniProtKB-UniRule"/>
</dbReference>
<dbReference type="FunFam" id="1.10.287.180:FF:000001">
    <property type="entry name" value="Transcription elongation factor GreA"/>
    <property type="match status" value="1"/>
</dbReference>
<dbReference type="FunFam" id="3.10.50.30:FF:000001">
    <property type="entry name" value="Transcription elongation factor GreA"/>
    <property type="match status" value="1"/>
</dbReference>
<dbReference type="Gene3D" id="3.10.50.30">
    <property type="entry name" value="Transcription elongation factor, GreA/GreB, C-terminal domain"/>
    <property type="match status" value="1"/>
</dbReference>
<dbReference type="Gene3D" id="1.10.287.180">
    <property type="entry name" value="Transcription elongation factor, GreA/GreB, N-terminal domain"/>
    <property type="match status" value="1"/>
</dbReference>
<dbReference type="HAMAP" id="MF_00105">
    <property type="entry name" value="GreA_GreB"/>
    <property type="match status" value="1"/>
</dbReference>
<dbReference type="InterPro" id="IPR036953">
    <property type="entry name" value="GreA/GreB_C_sf"/>
</dbReference>
<dbReference type="InterPro" id="IPR018151">
    <property type="entry name" value="TF_GreA/GreB_CS"/>
</dbReference>
<dbReference type="InterPro" id="IPR006359">
    <property type="entry name" value="Tscrpt_elong_fac_GreA"/>
</dbReference>
<dbReference type="InterPro" id="IPR028624">
    <property type="entry name" value="Tscrpt_elong_fac_GreA/B"/>
</dbReference>
<dbReference type="InterPro" id="IPR001437">
    <property type="entry name" value="Tscrpt_elong_fac_GreA/B_C"/>
</dbReference>
<dbReference type="InterPro" id="IPR023459">
    <property type="entry name" value="Tscrpt_elong_fac_GreA/B_fam"/>
</dbReference>
<dbReference type="InterPro" id="IPR022691">
    <property type="entry name" value="Tscrpt_elong_fac_GreA/B_N"/>
</dbReference>
<dbReference type="InterPro" id="IPR036805">
    <property type="entry name" value="Tscrpt_elong_fac_GreA/B_N_sf"/>
</dbReference>
<dbReference type="NCBIfam" id="TIGR01462">
    <property type="entry name" value="greA"/>
    <property type="match status" value="1"/>
</dbReference>
<dbReference type="NCBIfam" id="NF001261">
    <property type="entry name" value="PRK00226.1-2"/>
    <property type="match status" value="1"/>
</dbReference>
<dbReference type="NCBIfam" id="NF001263">
    <property type="entry name" value="PRK00226.1-4"/>
    <property type="match status" value="1"/>
</dbReference>
<dbReference type="PANTHER" id="PTHR30437">
    <property type="entry name" value="TRANSCRIPTION ELONGATION FACTOR GREA"/>
    <property type="match status" value="1"/>
</dbReference>
<dbReference type="PANTHER" id="PTHR30437:SF4">
    <property type="entry name" value="TRANSCRIPTION ELONGATION FACTOR GREA"/>
    <property type="match status" value="1"/>
</dbReference>
<dbReference type="Pfam" id="PF01272">
    <property type="entry name" value="GreA_GreB"/>
    <property type="match status" value="1"/>
</dbReference>
<dbReference type="Pfam" id="PF03449">
    <property type="entry name" value="GreA_GreB_N"/>
    <property type="match status" value="1"/>
</dbReference>
<dbReference type="PIRSF" id="PIRSF006092">
    <property type="entry name" value="GreA_GreB"/>
    <property type="match status" value="1"/>
</dbReference>
<dbReference type="SUPFAM" id="SSF54534">
    <property type="entry name" value="FKBP-like"/>
    <property type="match status" value="1"/>
</dbReference>
<dbReference type="SUPFAM" id="SSF46557">
    <property type="entry name" value="GreA transcript cleavage protein, N-terminal domain"/>
    <property type="match status" value="1"/>
</dbReference>
<dbReference type="PROSITE" id="PS00829">
    <property type="entry name" value="GREAB_1"/>
    <property type="match status" value="1"/>
</dbReference>
<feature type="chain" id="PRO_1000034322" description="Transcription elongation factor GreA">
    <location>
        <begin position="1"/>
        <end position="162"/>
    </location>
</feature>
<feature type="coiled-coil region" evidence="1">
    <location>
        <begin position="45"/>
        <end position="65"/>
    </location>
</feature>
<name>GREA_WOLSU</name>
<proteinExistence type="inferred from homology"/>
<protein>
    <recommendedName>
        <fullName evidence="1">Transcription elongation factor GreA</fullName>
    </recommendedName>
    <alternativeName>
        <fullName evidence="1">Transcript cleavage factor GreA</fullName>
    </alternativeName>
</protein>
<accession>Q7M9N2</accession>
<organism>
    <name type="scientific">Wolinella succinogenes (strain ATCC 29543 / DSM 1740 / CCUG 13145 / JCM 31913 / LMG 7466 / NCTC 11488 / FDC 602W)</name>
    <name type="common">Vibrio succinogenes</name>
    <dbReference type="NCBI Taxonomy" id="273121"/>
    <lineage>
        <taxon>Bacteria</taxon>
        <taxon>Pseudomonadati</taxon>
        <taxon>Campylobacterota</taxon>
        <taxon>Epsilonproteobacteria</taxon>
        <taxon>Campylobacterales</taxon>
        <taxon>Helicobacteraceae</taxon>
        <taxon>Wolinella</taxon>
    </lineage>
</organism>
<reference key="1">
    <citation type="journal article" date="2003" name="Proc. Natl. Acad. Sci. U.S.A.">
        <title>Complete genome sequence and analysis of Wolinella succinogenes.</title>
        <authorList>
            <person name="Baar C."/>
            <person name="Eppinger M."/>
            <person name="Raddatz G."/>
            <person name="Simon J."/>
            <person name="Lanz C."/>
            <person name="Klimmek O."/>
            <person name="Nandakumar R."/>
            <person name="Gross R."/>
            <person name="Rosinus A."/>
            <person name="Keller H."/>
            <person name="Jagtap P."/>
            <person name="Linke B."/>
            <person name="Meyer F."/>
            <person name="Lederer H."/>
            <person name="Schuster S.C."/>
        </authorList>
    </citation>
    <scope>NUCLEOTIDE SEQUENCE [LARGE SCALE GENOMIC DNA]</scope>
    <source>
        <strain>ATCC 29543 / DSM 1740 / CCUG 13145 / JCM 31913 / LMG 7466 / NCTC 11488 / FDC 602W</strain>
    </source>
</reference>
<keyword id="KW-0175">Coiled coil</keyword>
<keyword id="KW-0238">DNA-binding</keyword>
<keyword id="KW-1185">Reference proteome</keyword>
<keyword id="KW-0804">Transcription</keyword>
<keyword id="KW-0805">Transcription regulation</keyword>
<sequence length="162" mass="18720">MQKEPMTIYGYEKLQRELKELKEVERPQIVKEIDIARGHGDLKENAEYHAAKERQLFIEARINELSEILSRTQVVDPATITHEKISFGSTFKVMDLDTEFVYEYTIVGAPESNPDRGFISFYSPLARQLIGKVPGDEINAKLPNGEIDYEVLEVYYKEISFE</sequence>
<evidence type="ECO:0000255" key="1">
    <source>
        <dbReference type="HAMAP-Rule" id="MF_00105"/>
    </source>
</evidence>
<gene>
    <name evidence="1" type="primary">greA</name>
    <name type="ordered locus">WS0799</name>
</gene>
<comment type="function">
    <text evidence="1">Necessary for efficient RNA polymerase transcription elongation past template-encoded arresting sites. The arresting sites in DNA have the property of trapping a certain fraction of elongating RNA polymerases that pass through, resulting in locked ternary complexes. Cleavage of the nascent transcript by cleavage factors such as GreA or GreB allows the resumption of elongation from the new 3'terminus. GreA releases sequences of 2 to 3 nucleotides.</text>
</comment>
<comment type="similarity">
    <text evidence="1">Belongs to the GreA/GreB family.</text>
</comment>